<dbReference type="EC" id="1.3.1.20"/>
<dbReference type="EC" id="1.1.1.179"/>
<dbReference type="EMBL" id="BC074201">
    <property type="protein sequence ID" value="AAH74201.1"/>
    <property type="molecule type" value="mRNA"/>
</dbReference>
<dbReference type="RefSeq" id="NP_001086110.1">
    <property type="nucleotide sequence ID" value="NM_001092641.1"/>
</dbReference>
<dbReference type="SMR" id="Q6DKE0"/>
<dbReference type="GeneID" id="444539"/>
<dbReference type="KEGG" id="xla:444539"/>
<dbReference type="AGR" id="Xenbase:XB-GENE-968491"/>
<dbReference type="CTD" id="444539"/>
<dbReference type="Xenbase" id="XB-GENE-968491">
    <property type="gene designation" value="dhdl.L"/>
</dbReference>
<dbReference type="OMA" id="KMIQAPF"/>
<dbReference type="OrthoDB" id="2129491at2759"/>
<dbReference type="Proteomes" id="UP000186698">
    <property type="component" value="Chromosome 7L"/>
</dbReference>
<dbReference type="Bgee" id="444539">
    <property type="expression patterns" value="Expressed in kidney and 19 other cell types or tissues"/>
</dbReference>
<dbReference type="GO" id="GO:0047837">
    <property type="term" value="F:D-xylose 1-dehydrogenase (NADP+) activity"/>
    <property type="evidence" value="ECO:0000318"/>
    <property type="project" value="GO_Central"/>
</dbReference>
<dbReference type="GO" id="GO:0000166">
    <property type="term" value="F:nucleotide binding"/>
    <property type="evidence" value="ECO:0007669"/>
    <property type="project" value="InterPro"/>
</dbReference>
<dbReference type="GO" id="GO:0047115">
    <property type="term" value="F:trans-1,2-dihydrobenzene-1,2-diol dehydrogenase activity"/>
    <property type="evidence" value="ECO:0007669"/>
    <property type="project" value="UniProtKB-EC"/>
</dbReference>
<dbReference type="GO" id="GO:0042843">
    <property type="term" value="P:D-xylose catabolic process"/>
    <property type="evidence" value="ECO:0000318"/>
    <property type="project" value="GO_Central"/>
</dbReference>
<dbReference type="FunFam" id="3.30.360.10:FF:000031">
    <property type="entry name" value="Trans-1,2-dihydrobenzene-1,2-diol dehydrogenase"/>
    <property type="match status" value="1"/>
</dbReference>
<dbReference type="FunFam" id="3.40.50.720:FF:000269">
    <property type="entry name" value="Trans-1,2-dihydrobenzene-1,2-diol dehydrogenase"/>
    <property type="match status" value="1"/>
</dbReference>
<dbReference type="Gene3D" id="3.30.360.10">
    <property type="entry name" value="Dihydrodipicolinate Reductase, domain 2"/>
    <property type="match status" value="1"/>
</dbReference>
<dbReference type="Gene3D" id="3.40.50.720">
    <property type="entry name" value="NAD(P)-binding Rossmann-like Domain"/>
    <property type="match status" value="1"/>
</dbReference>
<dbReference type="InterPro" id="IPR000683">
    <property type="entry name" value="Gfo/Idh/MocA-like_OxRdtase_N"/>
</dbReference>
<dbReference type="InterPro" id="IPR050984">
    <property type="entry name" value="Gfo/Idh/MocA_domain"/>
</dbReference>
<dbReference type="InterPro" id="IPR055170">
    <property type="entry name" value="GFO_IDH_MocA-like_dom"/>
</dbReference>
<dbReference type="InterPro" id="IPR036291">
    <property type="entry name" value="NAD(P)-bd_dom_sf"/>
</dbReference>
<dbReference type="PANTHER" id="PTHR22604">
    <property type="entry name" value="OXIDOREDUCTASES"/>
    <property type="match status" value="1"/>
</dbReference>
<dbReference type="PANTHER" id="PTHR22604:SF105">
    <property type="entry name" value="TRANS-1,2-DIHYDROBENZENE-1,2-DIOL DEHYDROGENASE"/>
    <property type="match status" value="1"/>
</dbReference>
<dbReference type="Pfam" id="PF01408">
    <property type="entry name" value="GFO_IDH_MocA"/>
    <property type="match status" value="1"/>
</dbReference>
<dbReference type="Pfam" id="PF22725">
    <property type="entry name" value="GFO_IDH_MocA_C3"/>
    <property type="match status" value="1"/>
</dbReference>
<dbReference type="SUPFAM" id="SSF55347">
    <property type="entry name" value="Glyceraldehyde-3-phosphate dehydrogenase-like, C-terminal domain"/>
    <property type="match status" value="1"/>
</dbReference>
<dbReference type="SUPFAM" id="SSF51735">
    <property type="entry name" value="NAD(P)-binding Rossmann-fold domains"/>
    <property type="match status" value="1"/>
</dbReference>
<feature type="chain" id="PRO_0000315369" description="Trans-1,2-dihydrobenzene-1,2-diol dehydrogenase">
    <location>
        <begin position="1"/>
        <end position="330"/>
    </location>
</feature>
<feature type="site" description="May play an important role in coenzyme binding" evidence="1">
    <location>
        <position position="71"/>
    </location>
</feature>
<feature type="site" description="May play an important role in coenzyme binding" evidence="1">
    <location>
        <position position="79"/>
    </location>
</feature>
<feature type="site" description="May play an important role in coenzyme binding" evidence="1">
    <location>
        <position position="97"/>
    </location>
</feature>
<feature type="site" description="May play an important role for the adaptation of the alcohol substrate into the binding site" evidence="1">
    <location>
        <position position="176"/>
    </location>
</feature>
<feature type="site" description="May play an important role in catalytic activity" evidence="1">
    <location>
        <position position="180"/>
    </location>
</feature>
<proteinExistence type="evidence at transcript level"/>
<protein>
    <recommendedName>
        <fullName>Trans-1,2-dihydrobenzene-1,2-diol dehydrogenase</fullName>
        <ecNumber>1.3.1.20</ecNumber>
    </recommendedName>
    <alternativeName>
        <fullName>D-xylose 1-dehydrogenase</fullName>
    </alternativeName>
    <alternativeName>
        <fullName>D-xylose-NADP dehydrogenase</fullName>
        <ecNumber>1.1.1.179</ecNumber>
    </alternativeName>
    <alternativeName>
        <fullName>Dimeric dihydrodiol dehydrogenase</fullName>
    </alternativeName>
</protein>
<organism>
    <name type="scientific">Xenopus laevis</name>
    <name type="common">African clawed frog</name>
    <dbReference type="NCBI Taxonomy" id="8355"/>
    <lineage>
        <taxon>Eukaryota</taxon>
        <taxon>Metazoa</taxon>
        <taxon>Chordata</taxon>
        <taxon>Craniata</taxon>
        <taxon>Vertebrata</taxon>
        <taxon>Euteleostomi</taxon>
        <taxon>Amphibia</taxon>
        <taxon>Batrachia</taxon>
        <taxon>Anura</taxon>
        <taxon>Pipoidea</taxon>
        <taxon>Pipidae</taxon>
        <taxon>Xenopodinae</taxon>
        <taxon>Xenopus</taxon>
        <taxon>Xenopus</taxon>
    </lineage>
</organism>
<name>DHDH_XENLA</name>
<gene>
    <name type="primary">dhdh</name>
</gene>
<reference key="1">
    <citation type="submission" date="2004-06" db="EMBL/GenBank/DDBJ databases">
        <authorList>
            <consortium name="NIH - Xenopus Gene Collection (XGC) project"/>
        </authorList>
    </citation>
    <scope>NUCLEOTIDE SEQUENCE [LARGE SCALE MRNA]</scope>
    <source>
        <tissue>Kidney</tissue>
    </source>
</reference>
<sequence length="330" mass="36346">MATKWGICSTGRISNDFVVALSTLPAVDHQVVAVAARDLEKAKNFAQIHNIPKAYGSYEELAKDPDIDVIYVGAIHPVHRDVVLMCLQNGKNVLCEKPLAMNSAQVRELIAAARKFNVFLMEAFWSRFFPVYEEIRTLLSQKAIGDVKFIRAEFGTPIYTVPRAVEKELGGGALLDIGCYCVQFVTMVFNGEKPESVTARGFLHETGVDETISIILEYSGKRQAILSSTIMAALPNQTAICGTKGIIQIPSFMWSPTSVIVNGKETKFDVPHTTEPMNFSNGTGMSYEAEHVRQCLLKGLKESPIMSLADSEMIATIMDEALEQLGVMYP</sequence>
<keyword id="KW-0521">NADP</keyword>
<keyword id="KW-0560">Oxidoreductase</keyword>
<keyword id="KW-1185">Reference proteome</keyword>
<accession>Q6DKE0</accession>
<comment type="catalytic activity">
    <reaction>
        <text>(1R,2R)-1,2-dihydrobenzene-1,2-diol + NADP(+) = catechol + NADPH + H(+)</text>
        <dbReference type="Rhea" id="RHEA:16729"/>
        <dbReference type="ChEBI" id="CHEBI:10702"/>
        <dbReference type="ChEBI" id="CHEBI:15378"/>
        <dbReference type="ChEBI" id="CHEBI:18135"/>
        <dbReference type="ChEBI" id="CHEBI:57783"/>
        <dbReference type="ChEBI" id="CHEBI:58349"/>
        <dbReference type="EC" id="1.3.1.20"/>
    </reaction>
</comment>
<comment type="catalytic activity">
    <reaction>
        <text>D-xylose + NADP(+) = D-xylono-1,5-lactone + NADPH + H(+)</text>
        <dbReference type="Rhea" id="RHEA:22000"/>
        <dbReference type="ChEBI" id="CHEBI:15378"/>
        <dbReference type="ChEBI" id="CHEBI:15867"/>
        <dbReference type="ChEBI" id="CHEBI:53455"/>
        <dbReference type="ChEBI" id="CHEBI:57783"/>
        <dbReference type="ChEBI" id="CHEBI:58349"/>
        <dbReference type="EC" id="1.1.1.179"/>
    </reaction>
</comment>
<comment type="subunit">
    <text evidence="1">Homodimer.</text>
</comment>
<comment type="similarity">
    <text evidence="2">Belongs to the Gfo/Idh/MocA family.</text>
</comment>
<evidence type="ECO:0000250" key="1"/>
<evidence type="ECO:0000305" key="2"/>